<gene>
    <name type="primary">Dys</name>
    <name type="synonym">det</name>
    <name type="ORF">CG34157</name>
</gene>
<name>DMDB_DROME</name>
<comment type="function">
    <text evidence="6 8">Required for the maintenance of appropriate synaptic retrograde communication and the stabilization of muscle cell architecture or physiology. May play a role in anchoring the cytoskeleton to the plasma membrane.</text>
</comment>
<comment type="subunit">
    <text evidence="7">Component of the dystrophin associated protein complex (DAPC). Interacts with Dg, via the Dg WW domain binding sites.</text>
</comment>
<comment type="subcellular location">
    <subcellularLocation>
        <location evidence="6">Cell membrane</location>
        <location evidence="6">Sarcolemma</location>
        <topology evidence="6">Peripheral membrane protein</topology>
        <orientation evidence="6">Cytoplasmic side</orientation>
    </subcellularLocation>
    <subcellularLocation>
        <location evidence="6">Cytoplasm</location>
        <location evidence="6">Cytoskeleton</location>
    </subcellularLocation>
</comment>
<comment type="alternative products">
    <event type="alternative splicing"/>
    <isoform>
        <id>Q9VDW3-1</id>
        <name evidence="10">B</name>
        <name>Dp186</name>
        <sequence type="displayed"/>
    </isoform>
    <isoform>
        <id>Q9VDW6-1</id>
        <name evidence="5">A</name>
        <name evidence="5">DLP2</name>
        <sequence type="external"/>
    </isoform>
    <isoform>
        <id>Q9VDW6-2</id>
        <name evidence="10">C</name>
        <sequence type="external"/>
    </isoform>
    <isoform>
        <id>Q0KI50-1</id>
        <name>D</name>
        <name>Dp205</name>
        <sequence type="external"/>
    </isoform>
    <isoform>
        <id>Q7YU29-1</id>
        <name>E</name>
        <name>Dp117</name>
        <sequence type="external"/>
    </isoform>
    <isoform>
        <id>Q9VDW6-3</id>
        <name>F</name>
        <name evidence="5">DLP1</name>
        <sequence type="external"/>
    </isoform>
    <isoform>
        <id>Q9VDW6-4</id>
        <name>G</name>
        <name evidence="5">DLP3</name>
        <sequence type="external"/>
    </isoform>
    <isoform>
        <id>Q9VDW6-5</id>
        <name>H</name>
        <sequence type="external"/>
    </isoform>
</comment>
<comment type="tissue specificity">
    <text evidence="5 6">Expressed in neuronally derived tissues, mainly the CNS and the brain of stage 16 embryos. Lower level expression is seen in the sensory organs. Expression is absent from the musculature. In larvae, expression is predominant throughout the neuropil and brain and in the eye antennal disks.</text>
</comment>
<comment type="developmental stage">
    <text evidence="5 6">Expressed both maternally and zygotically throughout development.</text>
</comment>
<comment type="disruption phenotype">
    <text evidence="8">Flies that have reduced expression of all isoforms (transgenic RNA interference targeting the common C-terminal region) exhibit severe muscle degeneration in larvae and adult flies. Muscles were either ruptured, absent or the fibers were detached from their attachment sites at tendon cells. These are necrotic, not apoptotic processes.</text>
</comment>
<dbReference type="EMBL" id="AF300294">
    <property type="protein sequence ID" value="AAK15257.1"/>
    <property type="molecule type" value="mRNA"/>
</dbReference>
<dbReference type="EMBL" id="AE014297">
    <property type="protein sequence ID" value="AAF55676.3"/>
    <property type="molecule type" value="Genomic_DNA"/>
</dbReference>
<dbReference type="EMBL" id="X99757">
    <property type="protein sequence ID" value="CAA68088.1"/>
    <property type="molecule type" value="mRNA"/>
</dbReference>
<dbReference type="RefSeq" id="NP_001036721.1">
    <molecule id="Q9VDW3-1"/>
    <property type="nucleotide sequence ID" value="NM_001043256.2"/>
</dbReference>
<dbReference type="SMR" id="Q9VDW3"/>
<dbReference type="BioGRID" id="67322">
    <property type="interactions" value="74"/>
</dbReference>
<dbReference type="IntAct" id="Q9VDW3">
    <property type="interactions" value="2"/>
</dbReference>
<dbReference type="iPTMnet" id="Q9VDW3"/>
<dbReference type="DNASU" id="42327"/>
<dbReference type="EnsemblMetazoa" id="FBtr0083766">
    <molecule id="Q9VDW3-1"/>
    <property type="protein sequence ID" value="FBpp0083180"/>
    <property type="gene ID" value="FBgn0260003"/>
</dbReference>
<dbReference type="GeneID" id="42327"/>
<dbReference type="KEGG" id="dme:Dmel_CG34157"/>
<dbReference type="AGR" id="FB:FBgn0260003"/>
<dbReference type="CTD" id="42327"/>
<dbReference type="FlyBase" id="FBgn0260003">
    <property type="gene designation" value="Dys"/>
</dbReference>
<dbReference type="VEuPathDB" id="VectorBase:FBgn0260003"/>
<dbReference type="GeneTree" id="ENSGT00940000166230"/>
<dbReference type="OrthoDB" id="10057795at2759"/>
<dbReference type="BioGRID-ORCS" id="42327">
    <property type="hits" value="0 hits in 3 CRISPR screens"/>
</dbReference>
<dbReference type="GenomeRNAi" id="42327"/>
<dbReference type="Proteomes" id="UP000000803">
    <property type="component" value="Chromosome 3R"/>
</dbReference>
<dbReference type="Bgee" id="FBgn0260003">
    <property type="expression patterns" value="Expressed in adult brain perineurial glial cell (Drosophila) in insect head and 274 other cell types or tissues"/>
</dbReference>
<dbReference type="ExpressionAtlas" id="Q9VDW3">
    <property type="expression patterns" value="baseline and differential"/>
</dbReference>
<dbReference type="GO" id="GO:0005938">
    <property type="term" value="C:cell cortex"/>
    <property type="evidence" value="ECO:0007005"/>
    <property type="project" value="FlyBase"/>
</dbReference>
<dbReference type="GO" id="GO:0030054">
    <property type="term" value="C:cell junction"/>
    <property type="evidence" value="ECO:0000318"/>
    <property type="project" value="GO_Central"/>
</dbReference>
<dbReference type="GO" id="GO:0042995">
    <property type="term" value="C:cell projection"/>
    <property type="evidence" value="ECO:0000318"/>
    <property type="project" value="GO_Central"/>
</dbReference>
<dbReference type="GO" id="GO:0030864">
    <property type="term" value="C:cortical actin cytoskeleton"/>
    <property type="evidence" value="ECO:0000318"/>
    <property type="project" value="GO_Central"/>
</dbReference>
<dbReference type="GO" id="GO:0005737">
    <property type="term" value="C:cytoplasm"/>
    <property type="evidence" value="ECO:0000314"/>
    <property type="project" value="FlyBase"/>
</dbReference>
<dbReference type="GO" id="GO:0005856">
    <property type="term" value="C:cytoskeleton"/>
    <property type="evidence" value="ECO:0000314"/>
    <property type="project" value="UniProtKB"/>
</dbReference>
<dbReference type="GO" id="GO:0016010">
    <property type="term" value="C:dystrophin-associated glycoprotein complex"/>
    <property type="evidence" value="ECO:0000353"/>
    <property type="project" value="FlyBase"/>
</dbReference>
<dbReference type="GO" id="GO:0031594">
    <property type="term" value="C:neuromuscular junction"/>
    <property type="evidence" value="ECO:0000315"/>
    <property type="project" value="FlyBase"/>
</dbReference>
<dbReference type="GO" id="GO:0005886">
    <property type="term" value="C:plasma membrane"/>
    <property type="evidence" value="ECO:0000318"/>
    <property type="project" value="GO_Central"/>
</dbReference>
<dbReference type="GO" id="GO:0042383">
    <property type="term" value="C:sarcolemma"/>
    <property type="evidence" value="ECO:0007669"/>
    <property type="project" value="UniProtKB-SubCell"/>
</dbReference>
<dbReference type="GO" id="GO:0045202">
    <property type="term" value="C:synapse"/>
    <property type="evidence" value="ECO:0000314"/>
    <property type="project" value="UniProtKB"/>
</dbReference>
<dbReference type="GO" id="GO:0030018">
    <property type="term" value="C:Z disc"/>
    <property type="evidence" value="ECO:0000318"/>
    <property type="project" value="GO_Central"/>
</dbReference>
<dbReference type="GO" id="GO:0051015">
    <property type="term" value="F:actin filament binding"/>
    <property type="evidence" value="ECO:0000318"/>
    <property type="project" value="GO_Central"/>
</dbReference>
<dbReference type="GO" id="GO:0008307">
    <property type="term" value="F:structural constituent of muscle"/>
    <property type="evidence" value="ECO:0000250"/>
    <property type="project" value="FlyBase"/>
</dbReference>
<dbReference type="GO" id="GO:0050699">
    <property type="term" value="F:WW domain binding"/>
    <property type="evidence" value="ECO:0000353"/>
    <property type="project" value="FlyBase"/>
</dbReference>
<dbReference type="GO" id="GO:0008270">
    <property type="term" value="F:zinc ion binding"/>
    <property type="evidence" value="ECO:0007669"/>
    <property type="project" value="UniProtKB-KW"/>
</dbReference>
<dbReference type="GO" id="GO:0030036">
    <property type="term" value="P:actin cytoskeleton organization"/>
    <property type="evidence" value="ECO:0000318"/>
    <property type="project" value="GO_Central"/>
</dbReference>
<dbReference type="GO" id="GO:0030010">
    <property type="term" value="P:establishment of cell polarity"/>
    <property type="evidence" value="ECO:0000315"/>
    <property type="project" value="FlyBase"/>
</dbReference>
<dbReference type="GO" id="GO:0008586">
    <property type="term" value="P:imaginal disc-derived wing vein morphogenesis"/>
    <property type="evidence" value="ECO:0000315"/>
    <property type="project" value="FlyBase"/>
</dbReference>
<dbReference type="GO" id="GO:0007474">
    <property type="term" value="P:imaginal disc-derived wing vein specification"/>
    <property type="evidence" value="ECO:0000315"/>
    <property type="project" value="FlyBase"/>
</dbReference>
<dbReference type="GO" id="GO:0048790">
    <property type="term" value="P:maintenance of presynaptic active zone structure"/>
    <property type="evidence" value="ECO:0000315"/>
    <property type="project" value="FlyBase"/>
</dbReference>
<dbReference type="GO" id="GO:0046716">
    <property type="term" value="P:muscle cell cellular homeostasis"/>
    <property type="evidence" value="ECO:0000315"/>
    <property type="project" value="FlyBase"/>
</dbReference>
<dbReference type="GO" id="GO:0055001">
    <property type="term" value="P:muscle cell development"/>
    <property type="evidence" value="ECO:0000318"/>
    <property type="project" value="GO_Central"/>
</dbReference>
<dbReference type="GO" id="GO:0007517">
    <property type="term" value="P:muscle organ development"/>
    <property type="evidence" value="ECO:0000315"/>
    <property type="project" value="UniProtKB"/>
</dbReference>
<dbReference type="GO" id="GO:0007274">
    <property type="term" value="P:neuromuscular synaptic transmission"/>
    <property type="evidence" value="ECO:0000314"/>
    <property type="project" value="FlyBase"/>
</dbReference>
<dbReference type="GO" id="GO:0046928">
    <property type="term" value="P:regulation of neurotransmitter secretion"/>
    <property type="evidence" value="ECO:0000314"/>
    <property type="project" value="FlyBase"/>
</dbReference>
<dbReference type="GO" id="GO:0048172">
    <property type="term" value="P:regulation of short-term neuronal synaptic plasticity"/>
    <property type="evidence" value="ECO:0000314"/>
    <property type="project" value="FlyBase"/>
</dbReference>
<dbReference type="CDD" id="cd16242">
    <property type="entry name" value="EFh_DMD_like"/>
    <property type="match status" value="1"/>
</dbReference>
<dbReference type="CDD" id="cd00176">
    <property type="entry name" value="SPEC"/>
    <property type="match status" value="2"/>
</dbReference>
<dbReference type="CDD" id="cd00201">
    <property type="entry name" value="WW"/>
    <property type="match status" value="1"/>
</dbReference>
<dbReference type="CDD" id="cd02334">
    <property type="entry name" value="ZZ_dystrophin"/>
    <property type="match status" value="1"/>
</dbReference>
<dbReference type="FunFam" id="3.30.60.90:FF:000001">
    <property type="entry name" value="Dystrophin isoform 2"/>
    <property type="match status" value="1"/>
</dbReference>
<dbReference type="FunFam" id="1.20.58.60:FF:000151">
    <property type="entry name" value="dystrophin, isoforms A/C/F/G/H isoform X2"/>
    <property type="match status" value="1"/>
</dbReference>
<dbReference type="FunFam" id="1.20.58.60:FF:000150">
    <property type="entry name" value="dystrophin, isoforms A/C/F/G/H isoform X5"/>
    <property type="match status" value="1"/>
</dbReference>
<dbReference type="FunFam" id="1.20.58.60:FF:000175">
    <property type="entry name" value="dystrophin, isoforms A/C/F/G/H isoform X5"/>
    <property type="match status" value="1"/>
</dbReference>
<dbReference type="Gene3D" id="1.20.58.60">
    <property type="match status" value="3"/>
</dbReference>
<dbReference type="Gene3D" id="2.20.70.10">
    <property type="match status" value="1"/>
</dbReference>
<dbReference type="Gene3D" id="3.30.60.90">
    <property type="match status" value="1"/>
</dbReference>
<dbReference type="Gene3D" id="1.10.238.10">
    <property type="entry name" value="EF-hand"/>
    <property type="match status" value="2"/>
</dbReference>
<dbReference type="InterPro" id="IPR011992">
    <property type="entry name" value="EF-hand-dom_pair"/>
</dbReference>
<dbReference type="InterPro" id="IPR015153">
    <property type="entry name" value="EF-hand_dom_typ1"/>
</dbReference>
<dbReference type="InterPro" id="IPR015154">
    <property type="entry name" value="EF-hand_dom_typ2"/>
</dbReference>
<dbReference type="InterPro" id="IPR050774">
    <property type="entry name" value="KCMF1/Dystrophin"/>
</dbReference>
<dbReference type="InterPro" id="IPR018159">
    <property type="entry name" value="Spectrin/alpha-actinin"/>
</dbReference>
<dbReference type="InterPro" id="IPR002017">
    <property type="entry name" value="Spectrin_repeat"/>
</dbReference>
<dbReference type="InterPro" id="IPR001202">
    <property type="entry name" value="WW_dom"/>
</dbReference>
<dbReference type="InterPro" id="IPR036020">
    <property type="entry name" value="WW_dom_sf"/>
</dbReference>
<dbReference type="InterPro" id="IPR000433">
    <property type="entry name" value="Znf_ZZ"/>
</dbReference>
<dbReference type="InterPro" id="IPR043145">
    <property type="entry name" value="Znf_ZZ_sf"/>
</dbReference>
<dbReference type="PANTHER" id="PTHR12268:SF14">
    <property type="entry name" value="DYSTROPHIN-1"/>
    <property type="match status" value="1"/>
</dbReference>
<dbReference type="PANTHER" id="PTHR12268">
    <property type="entry name" value="E3 UBIQUITIN-PROTEIN LIGASE KCMF1"/>
    <property type="match status" value="1"/>
</dbReference>
<dbReference type="Pfam" id="PF09068">
    <property type="entry name" value="EF-hand_2"/>
    <property type="match status" value="1"/>
</dbReference>
<dbReference type="Pfam" id="PF09069">
    <property type="entry name" value="EF-hand_3"/>
    <property type="match status" value="1"/>
</dbReference>
<dbReference type="Pfam" id="PF00435">
    <property type="entry name" value="Spectrin"/>
    <property type="match status" value="2"/>
</dbReference>
<dbReference type="Pfam" id="PF00569">
    <property type="entry name" value="ZZ"/>
    <property type="match status" value="1"/>
</dbReference>
<dbReference type="SMART" id="SM00150">
    <property type="entry name" value="SPEC"/>
    <property type="match status" value="4"/>
</dbReference>
<dbReference type="SMART" id="SM00456">
    <property type="entry name" value="WW"/>
    <property type="match status" value="1"/>
</dbReference>
<dbReference type="SMART" id="SM00291">
    <property type="entry name" value="ZnF_ZZ"/>
    <property type="match status" value="1"/>
</dbReference>
<dbReference type="SUPFAM" id="SSF47473">
    <property type="entry name" value="EF-hand"/>
    <property type="match status" value="2"/>
</dbReference>
<dbReference type="SUPFAM" id="SSF57850">
    <property type="entry name" value="RING/U-box"/>
    <property type="match status" value="1"/>
</dbReference>
<dbReference type="SUPFAM" id="SSF46966">
    <property type="entry name" value="Spectrin repeat"/>
    <property type="match status" value="3"/>
</dbReference>
<dbReference type="SUPFAM" id="SSF51045">
    <property type="entry name" value="WW domain"/>
    <property type="match status" value="1"/>
</dbReference>
<dbReference type="PROSITE" id="PS50020">
    <property type="entry name" value="WW_DOMAIN_2"/>
    <property type="match status" value="1"/>
</dbReference>
<dbReference type="PROSITE" id="PS01357">
    <property type="entry name" value="ZF_ZZ_1"/>
    <property type="match status" value="1"/>
</dbReference>
<dbReference type="PROSITE" id="PS50135">
    <property type="entry name" value="ZF_ZZ_2"/>
    <property type="match status" value="1"/>
</dbReference>
<reference evidence="13" key="1">
    <citation type="journal article" date="2001" name="Gene">
        <title>The dystrophin / utrophin homologues in Drosophila and in sea urchin.</title>
        <authorList>
            <person name="Neuman S."/>
            <person name="Kaban A."/>
            <person name="Volk T."/>
            <person name="Yaffe D."/>
            <person name="Nudel U."/>
        </authorList>
    </citation>
    <scope>NUCLEOTIDE SEQUENCE [MRNA]</scope>
    <scope>TISSUE SPECIFICITY</scope>
    <scope>DEVELOPMENTAL STAGE</scope>
</reference>
<reference evidence="11" key="2">
    <citation type="journal article" date="2000" name="Science">
        <title>The genome sequence of Drosophila melanogaster.</title>
        <authorList>
            <person name="Adams M.D."/>
            <person name="Celniker S.E."/>
            <person name="Holt R.A."/>
            <person name="Evans C.A."/>
            <person name="Gocayne J.D."/>
            <person name="Amanatides P.G."/>
            <person name="Scherer S.E."/>
            <person name="Li P.W."/>
            <person name="Hoskins R.A."/>
            <person name="Galle R.F."/>
            <person name="George R.A."/>
            <person name="Lewis S.E."/>
            <person name="Richards S."/>
            <person name="Ashburner M."/>
            <person name="Henderson S.N."/>
            <person name="Sutton G.G."/>
            <person name="Wortman J.R."/>
            <person name="Yandell M.D."/>
            <person name="Zhang Q."/>
            <person name="Chen L.X."/>
            <person name="Brandon R.C."/>
            <person name="Rogers Y.-H.C."/>
            <person name="Blazej R.G."/>
            <person name="Champe M."/>
            <person name="Pfeiffer B.D."/>
            <person name="Wan K.H."/>
            <person name="Doyle C."/>
            <person name="Baxter E.G."/>
            <person name="Helt G."/>
            <person name="Nelson C.R."/>
            <person name="Miklos G.L.G."/>
            <person name="Abril J.F."/>
            <person name="Agbayani A."/>
            <person name="An H.-J."/>
            <person name="Andrews-Pfannkoch C."/>
            <person name="Baldwin D."/>
            <person name="Ballew R.M."/>
            <person name="Basu A."/>
            <person name="Baxendale J."/>
            <person name="Bayraktaroglu L."/>
            <person name="Beasley E.M."/>
            <person name="Beeson K.Y."/>
            <person name="Benos P.V."/>
            <person name="Berman B.P."/>
            <person name="Bhandari D."/>
            <person name="Bolshakov S."/>
            <person name="Borkova D."/>
            <person name="Botchan M.R."/>
            <person name="Bouck J."/>
            <person name="Brokstein P."/>
            <person name="Brottier P."/>
            <person name="Burtis K.C."/>
            <person name="Busam D.A."/>
            <person name="Butler H."/>
            <person name="Cadieu E."/>
            <person name="Center A."/>
            <person name="Chandra I."/>
            <person name="Cherry J.M."/>
            <person name="Cawley S."/>
            <person name="Dahlke C."/>
            <person name="Davenport L.B."/>
            <person name="Davies P."/>
            <person name="de Pablos B."/>
            <person name="Delcher A."/>
            <person name="Deng Z."/>
            <person name="Mays A.D."/>
            <person name="Dew I."/>
            <person name="Dietz S.M."/>
            <person name="Dodson K."/>
            <person name="Doup L.E."/>
            <person name="Downes M."/>
            <person name="Dugan-Rocha S."/>
            <person name="Dunkov B.C."/>
            <person name="Dunn P."/>
            <person name="Durbin K.J."/>
            <person name="Evangelista C.C."/>
            <person name="Ferraz C."/>
            <person name="Ferriera S."/>
            <person name="Fleischmann W."/>
            <person name="Fosler C."/>
            <person name="Gabrielian A.E."/>
            <person name="Garg N.S."/>
            <person name="Gelbart W.M."/>
            <person name="Glasser K."/>
            <person name="Glodek A."/>
            <person name="Gong F."/>
            <person name="Gorrell J.H."/>
            <person name="Gu Z."/>
            <person name="Guan P."/>
            <person name="Harris M."/>
            <person name="Harris N.L."/>
            <person name="Harvey D.A."/>
            <person name="Heiman T.J."/>
            <person name="Hernandez J.R."/>
            <person name="Houck J."/>
            <person name="Hostin D."/>
            <person name="Houston K.A."/>
            <person name="Howland T.J."/>
            <person name="Wei M.-H."/>
            <person name="Ibegwam C."/>
            <person name="Jalali M."/>
            <person name="Kalush F."/>
            <person name="Karpen G.H."/>
            <person name="Ke Z."/>
            <person name="Kennison J.A."/>
            <person name="Ketchum K.A."/>
            <person name="Kimmel B.E."/>
            <person name="Kodira C.D."/>
            <person name="Kraft C.L."/>
            <person name="Kravitz S."/>
            <person name="Kulp D."/>
            <person name="Lai Z."/>
            <person name="Lasko P."/>
            <person name="Lei Y."/>
            <person name="Levitsky A.A."/>
            <person name="Li J.H."/>
            <person name="Li Z."/>
            <person name="Liang Y."/>
            <person name="Lin X."/>
            <person name="Liu X."/>
            <person name="Mattei B."/>
            <person name="McIntosh T.C."/>
            <person name="McLeod M.P."/>
            <person name="McPherson D."/>
            <person name="Merkulov G."/>
            <person name="Milshina N.V."/>
            <person name="Mobarry C."/>
            <person name="Morris J."/>
            <person name="Moshrefi A."/>
            <person name="Mount S.M."/>
            <person name="Moy M."/>
            <person name="Murphy B."/>
            <person name="Murphy L."/>
            <person name="Muzny D.M."/>
            <person name="Nelson D.L."/>
            <person name="Nelson D.R."/>
            <person name="Nelson K.A."/>
            <person name="Nixon K."/>
            <person name="Nusskern D.R."/>
            <person name="Pacleb J.M."/>
            <person name="Palazzolo M."/>
            <person name="Pittman G.S."/>
            <person name="Pan S."/>
            <person name="Pollard J."/>
            <person name="Puri V."/>
            <person name="Reese M.G."/>
            <person name="Reinert K."/>
            <person name="Remington K."/>
            <person name="Saunders R.D.C."/>
            <person name="Scheeler F."/>
            <person name="Shen H."/>
            <person name="Shue B.C."/>
            <person name="Siden-Kiamos I."/>
            <person name="Simpson M."/>
            <person name="Skupski M.P."/>
            <person name="Smith T.J."/>
            <person name="Spier E."/>
            <person name="Spradling A.C."/>
            <person name="Stapleton M."/>
            <person name="Strong R."/>
            <person name="Sun E."/>
            <person name="Svirskas R."/>
            <person name="Tector C."/>
            <person name="Turner R."/>
            <person name="Venter E."/>
            <person name="Wang A.H."/>
            <person name="Wang X."/>
            <person name="Wang Z.-Y."/>
            <person name="Wassarman D.A."/>
            <person name="Weinstock G.M."/>
            <person name="Weissenbach J."/>
            <person name="Williams S.M."/>
            <person name="Woodage T."/>
            <person name="Worley K.C."/>
            <person name="Wu D."/>
            <person name="Yang S."/>
            <person name="Yao Q.A."/>
            <person name="Ye J."/>
            <person name="Yeh R.-F."/>
            <person name="Zaveri J.S."/>
            <person name="Zhan M."/>
            <person name="Zhang G."/>
            <person name="Zhao Q."/>
            <person name="Zheng L."/>
            <person name="Zheng X.H."/>
            <person name="Zhong F.N."/>
            <person name="Zhong W."/>
            <person name="Zhou X."/>
            <person name="Zhu S.C."/>
            <person name="Zhu X."/>
            <person name="Smith H.O."/>
            <person name="Gibbs R.A."/>
            <person name="Myers E.W."/>
            <person name="Rubin G.M."/>
            <person name="Venter J.C."/>
        </authorList>
    </citation>
    <scope>NUCLEOTIDE SEQUENCE [LARGE SCALE GENOMIC DNA]</scope>
    <source>
        <strain evidence="4">Berkeley</strain>
    </source>
</reference>
<reference evidence="11" key="3">
    <citation type="journal article" date="2002" name="Genome Biol.">
        <title>Annotation of the Drosophila melanogaster euchromatic genome: a systematic review.</title>
        <authorList>
            <person name="Misra S."/>
            <person name="Crosby M.A."/>
            <person name="Mungall C.J."/>
            <person name="Matthews B.B."/>
            <person name="Campbell K.S."/>
            <person name="Hradecky P."/>
            <person name="Huang Y."/>
            <person name="Kaminker J.S."/>
            <person name="Millburn G.H."/>
            <person name="Prochnik S.E."/>
            <person name="Smith C.D."/>
            <person name="Tupy J.L."/>
            <person name="Whitfield E.J."/>
            <person name="Bayraktaroglu L."/>
            <person name="Berman B.P."/>
            <person name="Bettencourt B.R."/>
            <person name="Celniker S.E."/>
            <person name="de Grey A.D.N.J."/>
            <person name="Drysdale R.A."/>
            <person name="Harris N.L."/>
            <person name="Richter J."/>
            <person name="Russo S."/>
            <person name="Schroeder A.J."/>
            <person name="Shu S.Q."/>
            <person name="Stapleton M."/>
            <person name="Yamada C."/>
            <person name="Ashburner M."/>
            <person name="Gelbart W.M."/>
            <person name="Rubin G.M."/>
            <person name="Lewis S.E."/>
        </authorList>
    </citation>
    <scope>GENOME REANNOTATION</scope>
    <scope>ALTERNATIVE SPLICING</scope>
    <source>
        <strain>Berkeley</strain>
    </source>
</reference>
<reference evidence="11" key="4">
    <citation type="journal article" date="1998" name="Hum. Mol. Genet.">
        <title>Dystrophins in vertebrates and invertebrates.</title>
        <authorList>
            <person name="Roberts R.G."/>
            <person name="Bobrow M."/>
        </authorList>
    </citation>
    <scope>NUCLEOTIDE SEQUENCE [MRNA] OF 643-1598</scope>
</reference>
<reference key="5">
    <citation type="journal article" date="2006" name="J. Neurosci.">
        <title>Dystrophin is required for appropriate retrograde control of neurotransmitter release at the Drosophila neuromuscular junction.</title>
        <authorList>
            <person name="van der Plas M.C."/>
            <person name="Pilgram G.S.K."/>
            <person name="Plomp J.J."/>
            <person name="de Jong A."/>
            <person name="Fradkin L.G."/>
            <person name="Noordermeer J.N."/>
        </authorList>
    </citation>
    <scope>FUNCTION</scope>
    <scope>SUBCELLULAR LOCATION</scope>
    <scope>TISSUE SPECIFICITY</scope>
    <scope>DEVELOPMENTAL STAGE</scope>
</reference>
<reference key="6">
    <citation type="journal article" date="2007" name="J. Biol. Chem.">
        <title>A putative Src homology 3 domain binding motif but not the C-terminal dystrophin WW domain binding motif is required for dystroglycan function in cellular polarity in Drosophila.</title>
        <authorList>
            <person name="Yatsenko A.S."/>
            <person name="Gray E.E."/>
            <person name="Shcherbata H.R."/>
            <person name="Patterson L.B."/>
            <person name="Sood V.D."/>
            <person name="Kucherenko M.M."/>
            <person name="Baker D."/>
            <person name="Ruohola-Baker H."/>
        </authorList>
    </citation>
    <scope>INTERACTION WITH DG</scope>
</reference>
<reference key="7">
    <citation type="journal article" date="2007" name="Mech. Dev.">
        <title>Drosophila Dystrophin is required for integrity of the musculature.</title>
        <authorList>
            <person name="van der Plas M.C."/>
            <person name="Pilgram G.S.K."/>
            <person name="de Jong A.W.M."/>
            <person name="Bansraj M.R.K.S."/>
            <person name="Fradkin L.G."/>
            <person name="Noordermeer J.N."/>
        </authorList>
    </citation>
    <scope>FUNCTION</scope>
    <scope>DISRUPTION PHENOTYPE</scope>
</reference>
<reference key="8">
    <citation type="journal article" date="2008" name="J. Proteome Res.">
        <title>Phosphoproteome analysis of Drosophila melanogaster embryos.</title>
        <authorList>
            <person name="Zhai B."/>
            <person name="Villen J."/>
            <person name="Beausoleil S.A."/>
            <person name="Mintseris J."/>
            <person name="Gygi S.P."/>
        </authorList>
    </citation>
    <scope>PHOSPHORYLATION [LARGE SCALE ANALYSIS] AT SER-1379</scope>
    <scope>IDENTIFICATION BY MASS SPECTROMETRY</scope>
    <source>
        <tissue>Embryo</tissue>
    </source>
</reference>
<protein>
    <recommendedName>
        <fullName>Dystrophin, isoform B</fullName>
    </recommendedName>
    <alternativeName>
        <fullName>Protein detached</fullName>
    </alternativeName>
</protein>
<sequence length="1669" mass="185311">MTAKPPPPIPPTLGGDDSGTHGPKLAPEIPRINSELAAQAALRGQQLLRKQGSQEQHATNTLPAHKTGAPPPLPPTQSRPVPAIPARGASDRAAPPEIPPKRHSLKSMPDGQPMMVPGLPPTMRQPPPLPRKPASTQSSAQNSAQSSPLAGMKFKDKPPPPPEKHSTLSAEGMAARRCSNPFEMPPPPPPLVLQSAVAALSEQSSKNGLNPVPSPAPTRASEAKKINQRSIASPTEEFGSEDALRGIESGLRNMERAMQEQMNLRNMEAAVQNNFDLSFKASLAAGARHLGGGSVNLRTANYERNLSLDEGRAGDSRQSLEELKQLRAQAQQQSLLNNSSSSSSNSQVEQSMRSTIEHHMRSLDRNLPLELQYSRHRFQNNLNAVAAAGGGGGNSSTGNAVANSGTSGSQQPPMPLSSEFREQIRQQLLGNIPPQVVHNMGQSPGSAAAAALLQHQAQSRAAAAAAAAAAAAAAAQVAAGSGALSREELRMRRRSSHDETQLTQNSSGGIQVTRLREHWDETSQCVLQRAAQLKNMLSDSQRFEAKRLELEKWLARMEQRAERMGTIATTADILEAQQKEQKSFHAELHQNKQHFDIFNELTQKLIAVYPNDDTTRIKKMTEVINQRYANLNSGVINRGKQLHAAVHSLQSFDRAMDQFLAFLSETETLCENAESDIERNPLMFKDLQSEIETHRVVYDRLDGTGRKLLGSLTSQEDAVMLQRRLDEMNQRWNNLKSKSIAIRNRLESNSEHWNALLLSLRELTEWVIRKDTELSTLGLGPVRGDAVSLQKQLDDHKAFRRQLEDKRPIVESNLTSGRQYIANEAAVSDTSDTEANHDSDSRYMSAEEQSRELTRSIRREVGKLSEQWNNLIDRSDNWKHRLDEYMTKMRQFQKILEDLSSRVALAEQTKTSWLPPSSVGEANEQMQQLQRLRDKMTTASALLDDCNEQQSFFTANQVLVPTPCLSKLEDLNTRMKLLQIAMDERQKVLCQAGAQQTHENGDDGRTTSNSGTIGPLPNLGQSVKPPWERATTAANVPYYIDHERETTHWDHPEMIELMKGLADLNEIRFSAYRTAMKLRSVQKRLALDRISMSTACESFDRHGLRAQNDKLIDIPDMTTVLHSLYVTIDKIDLTLMLDLAINWILNVYDSQRTGQIRVLSFKVGLVLLCKGHLEEKYRYLFRLVADTDRRADQRRLGLLLHDCIQVPRQLGEVAAFGGSNIEPSVRSCLEQAGISQEAIDGNQDISIELQHFLGWLQHEPQSLVWLPVLHRLAAAEAAKHQAKCNICKEYPIVGFRYRCLKCFNFDMCQKCFFFGRNAKNHKLTHPMHEYCTTTTSTEDVRDFTRALKNKFKSRKYFKKHPRVGYLPVQSVLEGDALESPAPSPQHTTHQLQNDMHSRLEMYASRLAQVEYGGTGSNSTPDSDDEHQLIAQYCQALPGTSNGSAPKSPVQVMAAMDAEQREELEAIIRDLEEENANLQAEYQQLCSKEQSGMPEDSNGMQHSSSSMTGLSGQGEQGQDMMAEAKLLRQHKGRLEARMQILEDHNRQLEAQLQRLRQLLDEPNGGGSSATSSGLPSAPGSALNSKPNTLQTRSVTASQLNTDSPAKMNQQNGHYEHNSKNSSGLVTVITEQELESINDDLEDSSSSNTTNTTTTTTTTATTEKTCVELQK</sequence>
<feature type="chain" id="PRO_0000076081" description="Dystrophin, isoform B">
    <location>
        <begin position="1"/>
        <end position="1669"/>
    </location>
</feature>
<feature type="repeat" description="Spectrin 1">
    <location>
        <begin position="541"/>
        <end position="643"/>
    </location>
</feature>
<feature type="repeat" description="Spectrin 2">
    <location>
        <begin position="650"/>
        <end position="747"/>
    </location>
</feature>
<feature type="repeat" description="Spectrin 3">
    <location>
        <begin position="754"/>
        <end position="883"/>
    </location>
</feature>
<feature type="repeat" description="Spectrin 4">
    <location>
        <begin position="890"/>
        <end position="990"/>
    </location>
</feature>
<feature type="domain" description="WW" evidence="1 11">
    <location>
        <begin position="1021"/>
        <end position="1054"/>
    </location>
</feature>
<feature type="zinc finger region" description="ZZ-type" evidence="2">
    <location>
        <begin position="1279"/>
        <end position="1335"/>
    </location>
</feature>
<feature type="region of interest" description="Disordered" evidence="3">
    <location>
        <begin position="1"/>
        <end position="28"/>
    </location>
</feature>
<feature type="region of interest" description="Disordered" evidence="3">
    <location>
        <begin position="43"/>
        <end position="243"/>
    </location>
</feature>
<feature type="region of interest" description="Disordered" evidence="3">
    <location>
        <begin position="327"/>
        <end position="356"/>
    </location>
</feature>
<feature type="region of interest" description="Disordered" evidence="3">
    <location>
        <begin position="389"/>
        <end position="417"/>
    </location>
</feature>
<feature type="region of interest" description="Disordered" evidence="3">
    <location>
        <begin position="481"/>
        <end position="508"/>
    </location>
</feature>
<feature type="region of interest" description="Disordered" evidence="3">
    <location>
        <begin position="827"/>
        <end position="851"/>
    </location>
</feature>
<feature type="region of interest" description="Disordered" evidence="3">
    <location>
        <begin position="994"/>
        <end position="1024"/>
    </location>
</feature>
<feature type="region of interest" description="Disordered" evidence="3">
    <location>
        <begin position="1488"/>
        <end position="1516"/>
    </location>
</feature>
<feature type="region of interest" description="Disordered" evidence="3">
    <location>
        <begin position="1559"/>
        <end position="1669"/>
    </location>
</feature>
<feature type="compositionally biased region" description="Pro residues" evidence="3">
    <location>
        <begin position="1"/>
        <end position="11"/>
    </location>
</feature>
<feature type="compositionally biased region" description="Polar residues" evidence="3">
    <location>
        <begin position="53"/>
        <end position="62"/>
    </location>
</feature>
<feature type="compositionally biased region" description="Pro residues" evidence="3">
    <location>
        <begin position="118"/>
        <end position="131"/>
    </location>
</feature>
<feature type="compositionally biased region" description="Low complexity" evidence="3">
    <location>
        <begin position="132"/>
        <end position="147"/>
    </location>
</feature>
<feature type="compositionally biased region" description="Basic and acidic residues" evidence="3">
    <location>
        <begin position="153"/>
        <end position="166"/>
    </location>
</feature>
<feature type="compositionally biased region" description="Low complexity" evidence="3">
    <location>
        <begin position="328"/>
        <end position="347"/>
    </location>
</feature>
<feature type="compositionally biased region" description="Low complexity" evidence="3">
    <location>
        <begin position="396"/>
        <end position="405"/>
    </location>
</feature>
<feature type="compositionally biased region" description="Basic and acidic residues" evidence="3">
    <location>
        <begin position="485"/>
        <end position="500"/>
    </location>
</feature>
<feature type="compositionally biased region" description="Polar residues" evidence="3">
    <location>
        <begin position="1497"/>
        <end position="1509"/>
    </location>
</feature>
<feature type="compositionally biased region" description="Polar residues" evidence="3">
    <location>
        <begin position="1580"/>
        <end position="1611"/>
    </location>
</feature>
<feature type="compositionally biased region" description="Acidic residues" evidence="3">
    <location>
        <begin position="1630"/>
        <end position="1641"/>
    </location>
</feature>
<feature type="compositionally biased region" description="Low complexity" evidence="3">
    <location>
        <begin position="1642"/>
        <end position="1660"/>
    </location>
</feature>
<feature type="binding site" evidence="2">
    <location>
        <position position="1284"/>
    </location>
    <ligand>
        <name>Zn(2+)</name>
        <dbReference type="ChEBI" id="CHEBI:29105"/>
        <label>1</label>
    </ligand>
</feature>
<feature type="binding site" evidence="2">
    <location>
        <position position="1287"/>
    </location>
    <ligand>
        <name>Zn(2+)</name>
        <dbReference type="ChEBI" id="CHEBI:29105"/>
        <label>1</label>
    </ligand>
</feature>
<feature type="binding site" evidence="2">
    <location>
        <position position="1299"/>
    </location>
    <ligand>
        <name>Zn(2+)</name>
        <dbReference type="ChEBI" id="CHEBI:29105"/>
        <label>2</label>
    </ligand>
</feature>
<feature type="binding site" evidence="2">
    <location>
        <position position="1302"/>
    </location>
    <ligand>
        <name>Zn(2+)</name>
        <dbReference type="ChEBI" id="CHEBI:29105"/>
        <label>2</label>
    </ligand>
</feature>
<feature type="binding site" evidence="2">
    <location>
        <position position="1308"/>
    </location>
    <ligand>
        <name>Zn(2+)</name>
        <dbReference type="ChEBI" id="CHEBI:29105"/>
        <label>1</label>
    </ligand>
</feature>
<feature type="binding site" evidence="2">
    <location>
        <position position="1311"/>
    </location>
    <ligand>
        <name>Zn(2+)</name>
        <dbReference type="ChEBI" id="CHEBI:29105"/>
        <label>1</label>
    </ligand>
</feature>
<feature type="binding site" evidence="2">
    <location>
        <position position="1321"/>
    </location>
    <ligand>
        <name>Zn(2+)</name>
        <dbReference type="ChEBI" id="CHEBI:29105"/>
        <label>2</label>
    </ligand>
</feature>
<feature type="binding site" evidence="2">
    <location>
        <position position="1325"/>
    </location>
    <ligand>
        <name>Zn(2+)</name>
        <dbReference type="ChEBI" id="CHEBI:29105"/>
        <label>2</label>
    </ligand>
</feature>
<feature type="modified residue" description="Phosphoserine" evidence="9">
    <location>
        <position position="1379"/>
    </location>
</feature>
<feature type="sequence conflict" description="In Ref. 4; CAA68088." evidence="11" ref="4">
    <original>HA</original>
    <variation>PR</variation>
    <location>
        <begin position="643"/>
        <end position="644"/>
    </location>
</feature>
<feature type="sequence conflict" description="In Ref. 1; AAK15257." evidence="11" ref="1">
    <original>D</original>
    <variation>N</variation>
    <location>
        <position position="699"/>
    </location>
</feature>
<feature type="sequence conflict" description="In Ref. 1; AAK15257 and 4; CAA68088." evidence="11" ref="1 4">
    <original>NLK</original>
    <variation>DLR</variation>
    <location>
        <begin position="734"/>
        <end position="736"/>
    </location>
</feature>
<feature type="sequence conflict" description="In Ref. 1; AAK15257 and 4; CAA68088." evidence="11" ref="1 4">
    <original>I</original>
    <variation>M</variation>
    <location>
        <position position="742"/>
    </location>
</feature>
<feature type="sequence conflict" description="In Ref. 1; AAK15257 and 4; CAA68088." evidence="11" ref="1 4">
    <original>T</original>
    <variation>S</variation>
    <location>
        <position position="772"/>
    </location>
</feature>
<feature type="sequence conflict" description="In Ref. 1; AAK15257 and 4; CAA68088." evidence="11" ref="1 4">
    <original>RG</original>
    <variation>LT</variation>
    <location>
        <begin position="783"/>
        <end position="784"/>
    </location>
</feature>
<feature type="sequence conflict" description="In Ref. 1; AAK15257 and 4; CAA68088." evidence="11" ref="1 4">
    <original>V</original>
    <variation>A</variation>
    <location>
        <position position="787"/>
    </location>
</feature>
<feature type="sequence conflict" description="In Ref. 1; AAK15257 and 4; CAA68088." evidence="11" ref="1 4">
    <original>T</original>
    <variation>R</variation>
    <location>
        <position position="854"/>
    </location>
</feature>
<feature type="sequence conflict" description="In Ref. 1; AAK15257 and 4; CAA68088." evidence="11" ref="1 4">
    <original>I</original>
    <variation>L</variation>
    <location>
        <position position="872"/>
    </location>
</feature>
<feature type="sequence conflict" description="In Ref. 4; CAA68088." evidence="11" ref="4">
    <original>M</original>
    <variation>L</variation>
    <location>
        <position position="886"/>
    </location>
</feature>
<feature type="sequence conflict" description="In Ref. 4; CAA68088." evidence="11" ref="4">
    <original>K</original>
    <variation>E</variation>
    <location>
        <position position="894"/>
    </location>
</feature>
<feature type="sequence conflict" description="In Ref. 4; CAA68088." evidence="11" ref="4">
    <original>NEQMQQLQ</original>
    <variation>ISRCNSCS</variation>
    <location>
        <begin position="923"/>
        <end position="930"/>
    </location>
</feature>
<feature type="sequence conflict" description="In Ref. 4; CAA68088." evidence="11" ref="4">
    <original>Q</original>
    <variation>E</variation>
    <location>
        <position position="957"/>
    </location>
</feature>
<feature type="sequence conflict" description="In Ref. 4; CAA68088." evidence="11" ref="4">
    <original>CQAGAQQTHEN</original>
    <variation>RQVEPSRRTRG</variation>
    <location>
        <begin position="990"/>
        <end position="1000"/>
    </location>
</feature>
<feature type="sequence conflict" description="In Ref. 1; AAK15257 and 4; CAA68088." evidence="11" ref="1 4">
    <original>E</original>
    <variation>Q</variation>
    <location>
        <position position="1045"/>
    </location>
</feature>
<feature type="sequence conflict" description="In Ref. 1; AAK15257 and 4; CAA68088." evidence="11" ref="1 4">
    <original>HGLRA</original>
    <variation>TWPAC</variation>
    <location>
        <begin position="1102"/>
        <end position="1106"/>
    </location>
</feature>
<feature type="sequence conflict" description="In Ref. 1; AAK15257 and 4; CAA68088." evidence="11" ref="1 4">
    <original>K</original>
    <variation>E</variation>
    <location>
        <position position="1110"/>
    </location>
</feature>
<feature type="sequence conflict" description="In Ref. 1; AAK15257 and 4; CAA68088." evidence="11" ref="1 4">
    <original>K</original>
    <variation>E</variation>
    <location>
        <position position="1130"/>
    </location>
</feature>
<feature type="sequence conflict" description="In Ref. 1; AAK15257 and 4; CAA68088." evidence="11" ref="1 4">
    <original>G</original>
    <variation>L</variation>
    <location>
        <position position="1294"/>
    </location>
</feature>
<feature type="sequence conflict" description="In Ref. 4; CAA68088." evidence="11" ref="4">
    <original>SQL</original>
    <variation>LRN</variation>
    <location>
        <begin position="1596"/>
        <end position="1598"/>
    </location>
</feature>
<keyword id="KW-0009">Actin-binding</keyword>
<keyword id="KW-0025">Alternative splicing</keyword>
<keyword id="KW-0106">Calcium</keyword>
<keyword id="KW-1003">Cell membrane</keyword>
<keyword id="KW-0963">Cytoplasm</keyword>
<keyword id="KW-0206">Cytoskeleton</keyword>
<keyword id="KW-0472">Membrane</keyword>
<keyword id="KW-0479">Metal-binding</keyword>
<keyword id="KW-0597">Phosphoprotein</keyword>
<keyword id="KW-1185">Reference proteome</keyword>
<keyword id="KW-0677">Repeat</keyword>
<keyword id="KW-0862">Zinc</keyword>
<keyword id="KW-0863">Zinc-finger</keyword>
<accession>Q9VDW3</accession>
<accession>O62529</accession>
<accession>Q9BK99</accession>
<organism evidence="12">
    <name type="scientific">Drosophila melanogaster</name>
    <name type="common">Fruit fly</name>
    <dbReference type="NCBI Taxonomy" id="7227"/>
    <lineage>
        <taxon>Eukaryota</taxon>
        <taxon>Metazoa</taxon>
        <taxon>Ecdysozoa</taxon>
        <taxon>Arthropoda</taxon>
        <taxon>Hexapoda</taxon>
        <taxon>Insecta</taxon>
        <taxon>Pterygota</taxon>
        <taxon>Neoptera</taxon>
        <taxon>Endopterygota</taxon>
        <taxon>Diptera</taxon>
        <taxon>Brachycera</taxon>
        <taxon>Muscomorpha</taxon>
        <taxon>Ephydroidea</taxon>
        <taxon>Drosophilidae</taxon>
        <taxon>Drosophila</taxon>
        <taxon>Sophophora</taxon>
    </lineage>
</organism>
<evidence type="ECO:0000255" key="1">
    <source>
        <dbReference type="PROSITE-ProRule" id="PRU00224"/>
    </source>
</evidence>
<evidence type="ECO:0000255" key="2">
    <source>
        <dbReference type="PROSITE-ProRule" id="PRU00228"/>
    </source>
</evidence>
<evidence type="ECO:0000256" key="3">
    <source>
        <dbReference type="SAM" id="MobiDB-lite"/>
    </source>
</evidence>
<evidence type="ECO:0000269" key="4">
    <source>
    </source>
</evidence>
<evidence type="ECO:0000269" key="5">
    <source>
    </source>
</evidence>
<evidence type="ECO:0000269" key="6">
    <source>
    </source>
</evidence>
<evidence type="ECO:0000269" key="7">
    <source>
    </source>
</evidence>
<evidence type="ECO:0000269" key="8">
    <source>
    </source>
</evidence>
<evidence type="ECO:0000269" key="9">
    <source>
    </source>
</evidence>
<evidence type="ECO:0000303" key="10">
    <source>
    </source>
</evidence>
<evidence type="ECO:0000305" key="11"/>
<evidence type="ECO:0000312" key="12">
    <source>
        <dbReference type="EMBL" id="AAF55676.3"/>
    </source>
</evidence>
<evidence type="ECO:0000312" key="13">
    <source>
        <dbReference type="EMBL" id="AAK15257.1"/>
    </source>
</evidence>
<proteinExistence type="evidence at protein level"/>